<accession>B1JR29</accession>
<reference key="1">
    <citation type="submission" date="2008-02" db="EMBL/GenBank/DDBJ databases">
        <title>Complete sequence of Yersinia pseudotuberculosis YPIII.</title>
        <authorList>
            <consortium name="US DOE Joint Genome Institute"/>
            <person name="Copeland A."/>
            <person name="Lucas S."/>
            <person name="Lapidus A."/>
            <person name="Glavina del Rio T."/>
            <person name="Dalin E."/>
            <person name="Tice H."/>
            <person name="Bruce D."/>
            <person name="Goodwin L."/>
            <person name="Pitluck S."/>
            <person name="Munk A.C."/>
            <person name="Brettin T."/>
            <person name="Detter J.C."/>
            <person name="Han C."/>
            <person name="Tapia R."/>
            <person name="Schmutz J."/>
            <person name="Larimer F."/>
            <person name="Land M."/>
            <person name="Hauser L."/>
            <person name="Challacombe J.F."/>
            <person name="Green L."/>
            <person name="Lindler L.E."/>
            <person name="Nikolich M.P."/>
            <person name="Richardson P."/>
        </authorList>
    </citation>
    <scope>NUCLEOTIDE SEQUENCE [LARGE SCALE GENOMIC DNA]</scope>
    <source>
        <strain>YPIII</strain>
    </source>
</reference>
<gene>
    <name evidence="1" type="primary">asnA</name>
    <name type="ordered locus">YPK_4214</name>
</gene>
<sequence>MKKQFIQKQQQISFVKSFFSRQLEQQLGLIEVQAPILSRVGDGTQDNLSGSEKAVQVKVKSLPDSTFEVVHSLAKWKRKTLGRFDFGADQGVYTHMKALRPDEDRLSAIHSVYVDQWDWERVMGDGERNLAYLKSTVNKIYAAIKETEAAISAEFGVKPFLPDHIQFIHSESLRARFPDLDAKGRERAIAKELGAVFLIGIGGKLADGQSHDVRAPDYDDWTSPSAEGFSGLNGDIIVWNPILEDAFEISSMGIRVDAEALKRQLALTGDEDRLELEWHQSLLRGEMPQTIGGGIGQSRLVMLLLQKQHIGQVQCGVWGPEISEKVDGLL</sequence>
<feature type="chain" id="PRO_1000129140" description="Aspartate--ammonia ligase">
    <location>
        <begin position="1"/>
        <end position="330"/>
    </location>
</feature>
<proteinExistence type="inferred from homology"/>
<dbReference type="EC" id="6.3.1.1" evidence="1"/>
<dbReference type="EMBL" id="CP000950">
    <property type="protein sequence ID" value="ACA70470.1"/>
    <property type="molecule type" value="Genomic_DNA"/>
</dbReference>
<dbReference type="RefSeq" id="WP_002212256.1">
    <property type="nucleotide sequence ID" value="NZ_CP009792.1"/>
</dbReference>
<dbReference type="SMR" id="B1JR29"/>
<dbReference type="GeneID" id="57974591"/>
<dbReference type="KEGG" id="ypy:YPK_4214"/>
<dbReference type="PATRIC" id="fig|502800.11.peg.564"/>
<dbReference type="UniPathway" id="UPA00134">
    <property type="reaction ID" value="UER00194"/>
</dbReference>
<dbReference type="GO" id="GO:0005829">
    <property type="term" value="C:cytosol"/>
    <property type="evidence" value="ECO:0007669"/>
    <property type="project" value="TreeGrafter"/>
</dbReference>
<dbReference type="GO" id="GO:0004071">
    <property type="term" value="F:aspartate-ammonia ligase activity"/>
    <property type="evidence" value="ECO:0007669"/>
    <property type="project" value="UniProtKB-UniRule"/>
</dbReference>
<dbReference type="GO" id="GO:0005524">
    <property type="term" value="F:ATP binding"/>
    <property type="evidence" value="ECO:0007669"/>
    <property type="project" value="UniProtKB-UniRule"/>
</dbReference>
<dbReference type="GO" id="GO:0070981">
    <property type="term" value="P:L-asparagine biosynthetic process"/>
    <property type="evidence" value="ECO:0007669"/>
    <property type="project" value="UniProtKB-UniRule"/>
</dbReference>
<dbReference type="Gene3D" id="3.30.930.10">
    <property type="entry name" value="Bira Bifunctional Protein, Domain 2"/>
    <property type="match status" value="1"/>
</dbReference>
<dbReference type="HAMAP" id="MF_00555">
    <property type="entry name" value="AsnA"/>
    <property type="match status" value="1"/>
</dbReference>
<dbReference type="InterPro" id="IPR006195">
    <property type="entry name" value="aa-tRNA-synth_II"/>
</dbReference>
<dbReference type="InterPro" id="IPR045864">
    <property type="entry name" value="aa-tRNA-synth_II/BPL/LPL"/>
</dbReference>
<dbReference type="InterPro" id="IPR004618">
    <property type="entry name" value="AsnA"/>
</dbReference>
<dbReference type="NCBIfam" id="TIGR00669">
    <property type="entry name" value="asnA"/>
    <property type="match status" value="1"/>
</dbReference>
<dbReference type="PANTHER" id="PTHR30073">
    <property type="entry name" value="ASPARTATE--AMMONIA LIGASE"/>
    <property type="match status" value="1"/>
</dbReference>
<dbReference type="PANTHER" id="PTHR30073:SF5">
    <property type="entry name" value="ASPARTATE--AMMONIA LIGASE"/>
    <property type="match status" value="1"/>
</dbReference>
<dbReference type="Pfam" id="PF03590">
    <property type="entry name" value="AsnA"/>
    <property type="match status" value="1"/>
</dbReference>
<dbReference type="PIRSF" id="PIRSF001555">
    <property type="entry name" value="Asp_ammon_ligase"/>
    <property type="match status" value="1"/>
</dbReference>
<dbReference type="SUPFAM" id="SSF55681">
    <property type="entry name" value="Class II aaRS and biotin synthetases"/>
    <property type="match status" value="1"/>
</dbReference>
<dbReference type="PROSITE" id="PS50862">
    <property type="entry name" value="AA_TRNA_LIGASE_II"/>
    <property type="match status" value="1"/>
</dbReference>
<name>ASNA_YERPY</name>
<protein>
    <recommendedName>
        <fullName evidence="1">Aspartate--ammonia ligase</fullName>
        <ecNumber evidence="1">6.3.1.1</ecNumber>
    </recommendedName>
    <alternativeName>
        <fullName evidence="1">Asparagine synthetase A</fullName>
    </alternativeName>
</protein>
<organism>
    <name type="scientific">Yersinia pseudotuberculosis serotype O:3 (strain YPIII)</name>
    <dbReference type="NCBI Taxonomy" id="502800"/>
    <lineage>
        <taxon>Bacteria</taxon>
        <taxon>Pseudomonadati</taxon>
        <taxon>Pseudomonadota</taxon>
        <taxon>Gammaproteobacteria</taxon>
        <taxon>Enterobacterales</taxon>
        <taxon>Yersiniaceae</taxon>
        <taxon>Yersinia</taxon>
    </lineage>
</organism>
<keyword id="KW-0028">Amino-acid biosynthesis</keyword>
<keyword id="KW-0061">Asparagine biosynthesis</keyword>
<keyword id="KW-0067">ATP-binding</keyword>
<keyword id="KW-0963">Cytoplasm</keyword>
<keyword id="KW-0436">Ligase</keyword>
<keyword id="KW-0547">Nucleotide-binding</keyword>
<comment type="catalytic activity">
    <reaction evidence="1">
        <text>L-aspartate + NH4(+) + ATP = L-asparagine + AMP + diphosphate + H(+)</text>
        <dbReference type="Rhea" id="RHEA:11372"/>
        <dbReference type="ChEBI" id="CHEBI:15378"/>
        <dbReference type="ChEBI" id="CHEBI:28938"/>
        <dbReference type="ChEBI" id="CHEBI:29991"/>
        <dbReference type="ChEBI" id="CHEBI:30616"/>
        <dbReference type="ChEBI" id="CHEBI:33019"/>
        <dbReference type="ChEBI" id="CHEBI:58048"/>
        <dbReference type="ChEBI" id="CHEBI:456215"/>
        <dbReference type="EC" id="6.3.1.1"/>
    </reaction>
</comment>
<comment type="pathway">
    <text evidence="1">Amino-acid biosynthesis; L-asparagine biosynthesis; L-asparagine from L-aspartate (ammonia route): step 1/1.</text>
</comment>
<comment type="subcellular location">
    <subcellularLocation>
        <location evidence="1">Cytoplasm</location>
    </subcellularLocation>
</comment>
<comment type="similarity">
    <text evidence="1">Belongs to the class-II aminoacyl-tRNA synthetase family. AsnA subfamily.</text>
</comment>
<evidence type="ECO:0000255" key="1">
    <source>
        <dbReference type="HAMAP-Rule" id="MF_00555"/>
    </source>
</evidence>